<proteinExistence type="inferred from homology"/>
<evidence type="ECO:0000305" key="1"/>
<reference key="1">
    <citation type="journal article" date="2002" name="Nature">
        <title>Complete genome sequence of the model actinomycete Streptomyces coelicolor A3(2).</title>
        <authorList>
            <person name="Bentley S.D."/>
            <person name="Chater K.F."/>
            <person name="Cerdeno-Tarraga A.-M."/>
            <person name="Challis G.L."/>
            <person name="Thomson N.R."/>
            <person name="James K.D."/>
            <person name="Harris D.E."/>
            <person name="Quail M.A."/>
            <person name="Kieser H."/>
            <person name="Harper D."/>
            <person name="Bateman A."/>
            <person name="Brown S."/>
            <person name="Chandra G."/>
            <person name="Chen C.W."/>
            <person name="Collins M."/>
            <person name="Cronin A."/>
            <person name="Fraser A."/>
            <person name="Goble A."/>
            <person name="Hidalgo J."/>
            <person name="Hornsby T."/>
            <person name="Howarth S."/>
            <person name="Huang C.-H."/>
            <person name="Kieser T."/>
            <person name="Larke L."/>
            <person name="Murphy L.D."/>
            <person name="Oliver K."/>
            <person name="O'Neil S."/>
            <person name="Rabbinowitsch E."/>
            <person name="Rajandream M.A."/>
            <person name="Rutherford K.M."/>
            <person name="Rutter S."/>
            <person name="Seeger K."/>
            <person name="Saunders D."/>
            <person name="Sharp S."/>
            <person name="Squares R."/>
            <person name="Squares S."/>
            <person name="Taylor K."/>
            <person name="Warren T."/>
            <person name="Wietzorrek A."/>
            <person name="Woodward J.R."/>
            <person name="Barrell B.G."/>
            <person name="Parkhill J."/>
            <person name="Hopwood D.A."/>
        </authorList>
    </citation>
    <scope>NUCLEOTIDE SEQUENCE [LARGE SCALE GENOMIC DNA]</scope>
    <source>
        <strain>ATCC BAA-471 / A3(2) / M145</strain>
    </source>
</reference>
<organism>
    <name type="scientific">Streptomyces coelicolor (strain ATCC BAA-471 / A3(2) / M145)</name>
    <dbReference type="NCBI Taxonomy" id="100226"/>
    <lineage>
        <taxon>Bacteria</taxon>
        <taxon>Bacillati</taxon>
        <taxon>Actinomycetota</taxon>
        <taxon>Actinomycetes</taxon>
        <taxon>Kitasatosporales</taxon>
        <taxon>Streptomycetaceae</taxon>
        <taxon>Streptomyces</taxon>
        <taxon>Streptomyces albidoflavus group</taxon>
    </lineage>
</organism>
<dbReference type="EC" id="4.1.1.48"/>
<dbReference type="EMBL" id="AL939115">
    <property type="protein sequence ID" value="CAB38582.1"/>
    <property type="molecule type" value="Genomic_DNA"/>
</dbReference>
<dbReference type="PIR" id="T36303">
    <property type="entry name" value="T36303"/>
</dbReference>
<dbReference type="RefSeq" id="NP_627425.1">
    <property type="nucleotide sequence ID" value="NC_003888.3"/>
</dbReference>
<dbReference type="SMR" id="Q9Z4X0"/>
<dbReference type="STRING" id="100226.gene:17760829"/>
<dbReference type="PaxDb" id="100226-SCO3211"/>
<dbReference type="KEGG" id="sco:SCO3211"/>
<dbReference type="PATRIC" id="fig|100226.15.peg.3271"/>
<dbReference type="eggNOG" id="COG0134">
    <property type="taxonomic scope" value="Bacteria"/>
</dbReference>
<dbReference type="HOGENOM" id="CLU_034247_2_0_11"/>
<dbReference type="InParanoid" id="Q9Z4X0"/>
<dbReference type="OrthoDB" id="9804217at2"/>
<dbReference type="PhylomeDB" id="Q9Z4X0"/>
<dbReference type="UniPathway" id="UPA00035">
    <property type="reaction ID" value="UER00043"/>
</dbReference>
<dbReference type="Proteomes" id="UP000001973">
    <property type="component" value="Chromosome"/>
</dbReference>
<dbReference type="GO" id="GO:0004425">
    <property type="term" value="F:indole-3-glycerol-phosphate synthase activity"/>
    <property type="evidence" value="ECO:0000318"/>
    <property type="project" value="GO_Central"/>
</dbReference>
<dbReference type="GO" id="GO:0004640">
    <property type="term" value="F:phosphoribosylanthranilate isomerase activity"/>
    <property type="evidence" value="ECO:0000318"/>
    <property type="project" value="GO_Central"/>
</dbReference>
<dbReference type="GO" id="GO:0017000">
    <property type="term" value="P:antibiotic biosynthetic process"/>
    <property type="evidence" value="ECO:0007669"/>
    <property type="project" value="UniProtKB-KW"/>
</dbReference>
<dbReference type="GO" id="GO:0000162">
    <property type="term" value="P:L-tryptophan biosynthetic process"/>
    <property type="evidence" value="ECO:0000318"/>
    <property type="project" value="GO_Central"/>
</dbReference>
<dbReference type="CDD" id="cd00331">
    <property type="entry name" value="IGPS"/>
    <property type="match status" value="1"/>
</dbReference>
<dbReference type="FunFam" id="3.20.20.70:FF:000024">
    <property type="entry name" value="Indole-3-glycerol phosphate synthase"/>
    <property type="match status" value="1"/>
</dbReference>
<dbReference type="Gene3D" id="3.20.20.70">
    <property type="entry name" value="Aldolase class I"/>
    <property type="match status" value="1"/>
</dbReference>
<dbReference type="HAMAP" id="MF_00134_B">
    <property type="entry name" value="IGPS_B"/>
    <property type="match status" value="1"/>
</dbReference>
<dbReference type="InterPro" id="IPR013785">
    <property type="entry name" value="Aldolase_TIM"/>
</dbReference>
<dbReference type="InterPro" id="IPR045186">
    <property type="entry name" value="Indole-3-glycerol_P_synth"/>
</dbReference>
<dbReference type="InterPro" id="IPR013798">
    <property type="entry name" value="Indole-3-glycerol_P_synth_dom"/>
</dbReference>
<dbReference type="InterPro" id="IPR001468">
    <property type="entry name" value="Indole-3-GlycerolPSynthase_CS"/>
</dbReference>
<dbReference type="InterPro" id="IPR011060">
    <property type="entry name" value="RibuloseP-bd_barrel"/>
</dbReference>
<dbReference type="NCBIfam" id="NF001377">
    <property type="entry name" value="PRK00278.2-4"/>
    <property type="match status" value="1"/>
</dbReference>
<dbReference type="PANTHER" id="PTHR22854:SF2">
    <property type="entry name" value="INDOLE-3-GLYCEROL-PHOSPHATE SYNTHASE"/>
    <property type="match status" value="1"/>
</dbReference>
<dbReference type="PANTHER" id="PTHR22854">
    <property type="entry name" value="TRYPTOPHAN BIOSYNTHESIS PROTEIN"/>
    <property type="match status" value="1"/>
</dbReference>
<dbReference type="Pfam" id="PF00218">
    <property type="entry name" value="IGPS"/>
    <property type="match status" value="1"/>
</dbReference>
<dbReference type="SUPFAM" id="SSF51366">
    <property type="entry name" value="Ribulose-phoshate binding barrel"/>
    <property type="match status" value="1"/>
</dbReference>
<dbReference type="PROSITE" id="PS00614">
    <property type="entry name" value="IGPS"/>
    <property type="match status" value="1"/>
</dbReference>
<feature type="chain" id="PRO_0000154260" description="Indole-3-glycerol phosphate synthase 2">
    <location>
        <begin position="1"/>
        <end position="258"/>
    </location>
</feature>
<accession>Q9Z4X0</accession>
<comment type="function">
    <text>The function of the second trp operon in S.coelicolor is to produce tryptophan for the biosynthesis of calcium-dependent antibiotic (CDA).</text>
</comment>
<comment type="catalytic activity">
    <reaction>
        <text>1-(2-carboxyphenylamino)-1-deoxy-D-ribulose 5-phosphate + H(+) = (1S,2R)-1-C-(indol-3-yl)glycerol 3-phosphate + CO2 + H2O</text>
        <dbReference type="Rhea" id="RHEA:23476"/>
        <dbReference type="ChEBI" id="CHEBI:15377"/>
        <dbReference type="ChEBI" id="CHEBI:15378"/>
        <dbReference type="ChEBI" id="CHEBI:16526"/>
        <dbReference type="ChEBI" id="CHEBI:58613"/>
        <dbReference type="ChEBI" id="CHEBI:58866"/>
        <dbReference type="EC" id="4.1.1.48"/>
    </reaction>
</comment>
<comment type="pathway">
    <text>Amino-acid biosynthesis; L-tryptophan biosynthesis; L-tryptophan from chorismate: step 4/5.</text>
</comment>
<comment type="similarity">
    <text evidence="1">Belongs to the TrpC family.</text>
</comment>
<protein>
    <recommendedName>
        <fullName>Indole-3-glycerol phosphate synthase 2</fullName>
        <shortName>IGPS 2</shortName>
        <ecNumber>4.1.1.48</ecNumber>
    </recommendedName>
</protein>
<name>TRPC2_STRCO</name>
<gene>
    <name type="primary">trpC2</name>
    <name type="ordered locus">SCO3211</name>
    <name type="ORF">SCE8.04c</name>
</gene>
<sequence>MSGILAGLVAEAESQTGRRRALRTEAKLTELAAAAPPARDFAAALREPGLAVIAEMKPRSPSKGPLTDDYRPAELARAYQGGGAHAVSVLTHEAGFGGSPDHLAVARAACELPVLRKDFVVDEYQILEARALGADALLLIVAALAPARLAALLARTRACGMEALVEVHDEREVDVALEAGADVIGVNHRDLRDFSIDRTLSARLRGRVGTGRVMVGESGVRGAPDARALEAAGVDAVLVGELLMRAGDPGTTIKGLVG</sequence>
<keyword id="KW-0028">Amino-acid biosynthesis</keyword>
<keyword id="KW-0045">Antibiotic biosynthesis</keyword>
<keyword id="KW-0057">Aromatic amino acid biosynthesis</keyword>
<keyword id="KW-0210">Decarboxylase</keyword>
<keyword id="KW-0456">Lyase</keyword>
<keyword id="KW-1185">Reference proteome</keyword>
<keyword id="KW-0822">Tryptophan biosynthesis</keyword>